<protein>
    <recommendedName>
        <fullName evidence="1">Cobyric acid synthase</fullName>
    </recommendedName>
</protein>
<gene>
    <name evidence="1" type="primary">cobQ</name>
    <name type="ordered locus">HCH_00962</name>
</gene>
<accession>Q2SNC4</accession>
<dbReference type="EMBL" id="CP000155">
    <property type="protein sequence ID" value="ABC27850.1"/>
    <property type="molecule type" value="Genomic_DNA"/>
</dbReference>
<dbReference type="RefSeq" id="WP_011394925.1">
    <property type="nucleotide sequence ID" value="NC_007645.1"/>
</dbReference>
<dbReference type="SMR" id="Q2SNC4"/>
<dbReference type="STRING" id="349521.HCH_00962"/>
<dbReference type="KEGG" id="hch:HCH_00962"/>
<dbReference type="eggNOG" id="COG1492">
    <property type="taxonomic scope" value="Bacteria"/>
</dbReference>
<dbReference type="HOGENOM" id="CLU_019250_2_2_6"/>
<dbReference type="OrthoDB" id="9808302at2"/>
<dbReference type="UniPathway" id="UPA00148"/>
<dbReference type="Proteomes" id="UP000000238">
    <property type="component" value="Chromosome"/>
</dbReference>
<dbReference type="GO" id="GO:0015420">
    <property type="term" value="F:ABC-type vitamin B12 transporter activity"/>
    <property type="evidence" value="ECO:0007669"/>
    <property type="project" value="UniProtKB-UniRule"/>
</dbReference>
<dbReference type="GO" id="GO:0003824">
    <property type="term" value="F:catalytic activity"/>
    <property type="evidence" value="ECO:0007669"/>
    <property type="project" value="InterPro"/>
</dbReference>
<dbReference type="GO" id="GO:0009236">
    <property type="term" value="P:cobalamin biosynthetic process"/>
    <property type="evidence" value="ECO:0007669"/>
    <property type="project" value="UniProtKB-UniRule"/>
</dbReference>
<dbReference type="CDD" id="cd05389">
    <property type="entry name" value="CobQ_N"/>
    <property type="match status" value="1"/>
</dbReference>
<dbReference type="CDD" id="cd01750">
    <property type="entry name" value="GATase1_CobQ"/>
    <property type="match status" value="1"/>
</dbReference>
<dbReference type="Gene3D" id="3.40.50.880">
    <property type="match status" value="1"/>
</dbReference>
<dbReference type="Gene3D" id="3.40.50.300">
    <property type="entry name" value="P-loop containing nucleotide triphosphate hydrolases"/>
    <property type="match status" value="1"/>
</dbReference>
<dbReference type="HAMAP" id="MF_00028">
    <property type="entry name" value="CobQ"/>
    <property type="match status" value="1"/>
</dbReference>
<dbReference type="InterPro" id="IPR029062">
    <property type="entry name" value="Class_I_gatase-like"/>
</dbReference>
<dbReference type="InterPro" id="IPR002586">
    <property type="entry name" value="CobQ/CobB/MinD/ParA_Nub-bd_dom"/>
</dbReference>
<dbReference type="InterPro" id="IPR033949">
    <property type="entry name" value="CobQ_GATase1"/>
</dbReference>
<dbReference type="InterPro" id="IPR047045">
    <property type="entry name" value="CobQ_N"/>
</dbReference>
<dbReference type="InterPro" id="IPR004459">
    <property type="entry name" value="CobQ_synth"/>
</dbReference>
<dbReference type="InterPro" id="IPR011698">
    <property type="entry name" value="GATase_3"/>
</dbReference>
<dbReference type="InterPro" id="IPR027417">
    <property type="entry name" value="P-loop_NTPase"/>
</dbReference>
<dbReference type="NCBIfam" id="TIGR00313">
    <property type="entry name" value="cobQ"/>
    <property type="match status" value="1"/>
</dbReference>
<dbReference type="NCBIfam" id="NF001989">
    <property type="entry name" value="PRK00784.1"/>
    <property type="match status" value="1"/>
</dbReference>
<dbReference type="PANTHER" id="PTHR21343:SF1">
    <property type="entry name" value="COBYRIC ACID SYNTHASE"/>
    <property type="match status" value="1"/>
</dbReference>
<dbReference type="PANTHER" id="PTHR21343">
    <property type="entry name" value="DETHIOBIOTIN SYNTHETASE"/>
    <property type="match status" value="1"/>
</dbReference>
<dbReference type="Pfam" id="PF01656">
    <property type="entry name" value="CbiA"/>
    <property type="match status" value="1"/>
</dbReference>
<dbReference type="Pfam" id="PF07685">
    <property type="entry name" value="GATase_3"/>
    <property type="match status" value="1"/>
</dbReference>
<dbReference type="SUPFAM" id="SSF52317">
    <property type="entry name" value="Class I glutamine amidotransferase-like"/>
    <property type="match status" value="1"/>
</dbReference>
<dbReference type="SUPFAM" id="SSF52540">
    <property type="entry name" value="P-loop containing nucleoside triphosphate hydrolases"/>
    <property type="match status" value="1"/>
</dbReference>
<dbReference type="PROSITE" id="PS51274">
    <property type="entry name" value="GATASE_COBBQ"/>
    <property type="match status" value="1"/>
</dbReference>
<organism>
    <name type="scientific">Hahella chejuensis (strain KCTC 2396)</name>
    <dbReference type="NCBI Taxonomy" id="349521"/>
    <lineage>
        <taxon>Bacteria</taxon>
        <taxon>Pseudomonadati</taxon>
        <taxon>Pseudomonadota</taxon>
        <taxon>Gammaproteobacteria</taxon>
        <taxon>Oceanospirillales</taxon>
        <taxon>Hahellaceae</taxon>
        <taxon>Hahella</taxon>
    </lineage>
</organism>
<comment type="function">
    <text evidence="1">Catalyzes amidations at positions B, D, E, and G on adenosylcobyrinic A,C-diamide. NH(2) groups are provided by glutamine, and one molecule of ATP is hydrogenolyzed for each amidation.</text>
</comment>
<comment type="pathway">
    <text evidence="1">Cofactor biosynthesis; adenosylcobalamin biosynthesis.</text>
</comment>
<comment type="similarity">
    <text evidence="1">Belongs to the CobB/CobQ family. CobQ subfamily.</text>
</comment>
<sequence>MTNKTLMIQGTTSDAGKSTLVTAICRSLLRRGVKVAPFKPQNMALNSAVTVDGGEIGRAQAVQAQACGLQPHTDMNPVLLKPNTDIGAQVIIHGKARANMDAVAYHDYKRTAMQAVLESFQRLSSAYDAVLVEGAGSPAEINLRDRDIANMGFAEEVDCPVILVADIDRGGVFAHLVGTLALLSESEQRRVRGFVINRFRGDIALLEPGLRWLEEYTGKPVLGVLPYLNGLHLEAEDALPRDSIVKSDATLKVIAPALPRISNHTDFDPLRLHPQVDFQFIGPGQSPPPADLIILPGSKSVRNDLQWLRENGWEEVIRKHLRYGGRVIGICGGYQMLGRSIADPHGLEGVAGESVGLGWLDIATTLEPEKQLRRVEGRLWLDDARITGYEIHAGVTRCLASQTSAVCLEDGRLDGVVSDDNQVLGLYLHGLFESPQALTALLRWAGLNEVQRLDYDALREADINRLADVVDQYLNWEEIAGFLQVGPNSDDRESRA</sequence>
<feature type="chain" id="PRO_0000332340" description="Cobyric acid synthase">
    <location>
        <begin position="1"/>
        <end position="496"/>
    </location>
</feature>
<feature type="domain" description="GATase cobBQ-type" evidence="1">
    <location>
        <begin position="250"/>
        <end position="437"/>
    </location>
</feature>
<feature type="active site" description="Nucleophile" evidence="1">
    <location>
        <position position="331"/>
    </location>
</feature>
<feature type="active site" evidence="1">
    <location>
        <position position="429"/>
    </location>
</feature>
<evidence type="ECO:0000255" key="1">
    <source>
        <dbReference type="HAMAP-Rule" id="MF_00028"/>
    </source>
</evidence>
<proteinExistence type="inferred from homology"/>
<name>COBQ_HAHCH</name>
<keyword id="KW-0169">Cobalamin biosynthesis</keyword>
<keyword id="KW-0315">Glutamine amidotransferase</keyword>
<keyword id="KW-1185">Reference proteome</keyword>
<reference key="1">
    <citation type="journal article" date="2005" name="Nucleic Acids Res.">
        <title>Genomic blueprint of Hahella chejuensis, a marine microbe producing an algicidal agent.</title>
        <authorList>
            <person name="Jeong H."/>
            <person name="Yim J.H."/>
            <person name="Lee C."/>
            <person name="Choi S.-H."/>
            <person name="Park Y.K."/>
            <person name="Yoon S.H."/>
            <person name="Hur C.-G."/>
            <person name="Kang H.-Y."/>
            <person name="Kim D."/>
            <person name="Lee H.H."/>
            <person name="Park K.H."/>
            <person name="Park S.-H."/>
            <person name="Park H.-S."/>
            <person name="Lee H.K."/>
            <person name="Oh T.K."/>
            <person name="Kim J.F."/>
        </authorList>
    </citation>
    <scope>NUCLEOTIDE SEQUENCE [LARGE SCALE GENOMIC DNA]</scope>
    <source>
        <strain>KCTC 2396</strain>
    </source>
</reference>